<feature type="signal peptide" evidence="2">
    <location>
        <begin position="1"/>
        <end position="18"/>
    </location>
</feature>
<feature type="chain" id="PRO_0000009488" description="Flagellar L-ring protein 2">
    <location>
        <begin position="19"/>
        <end position="229"/>
    </location>
</feature>
<feature type="lipid moiety-binding region" description="N-palmitoyl cysteine" evidence="2">
    <location>
        <position position="19"/>
    </location>
</feature>
<feature type="lipid moiety-binding region" description="S-diacylglycerol cysteine" evidence="2">
    <location>
        <position position="19"/>
    </location>
</feature>
<protein>
    <recommendedName>
        <fullName>Flagellar L-ring protein 2</fullName>
    </recommendedName>
    <alternativeName>
        <fullName>Basal body L-ring protein 2</fullName>
    </alternativeName>
</protein>
<evidence type="ECO:0000250" key="1"/>
<evidence type="ECO:0000255" key="2"/>
<evidence type="ECO:0000305" key="3"/>
<gene>
    <name type="primary">flgH2</name>
    <name type="ordered locus">YPO1805</name>
    <name type="ordered locus">y2504</name>
    <name type="ordered locus">YP_1588</name>
</gene>
<reference key="1">
    <citation type="journal article" date="2001" name="Nature">
        <title>Genome sequence of Yersinia pestis, the causative agent of plague.</title>
        <authorList>
            <person name="Parkhill J."/>
            <person name="Wren B.W."/>
            <person name="Thomson N.R."/>
            <person name="Titball R.W."/>
            <person name="Holden M.T.G."/>
            <person name="Prentice M.B."/>
            <person name="Sebaihia M."/>
            <person name="James K.D."/>
            <person name="Churcher C.M."/>
            <person name="Mungall K.L."/>
            <person name="Baker S."/>
            <person name="Basham D."/>
            <person name="Bentley S.D."/>
            <person name="Brooks K."/>
            <person name="Cerdeno-Tarraga A.-M."/>
            <person name="Chillingworth T."/>
            <person name="Cronin A."/>
            <person name="Davies R.M."/>
            <person name="Davis P."/>
            <person name="Dougan G."/>
            <person name="Feltwell T."/>
            <person name="Hamlin N."/>
            <person name="Holroyd S."/>
            <person name="Jagels K."/>
            <person name="Karlyshev A.V."/>
            <person name="Leather S."/>
            <person name="Moule S."/>
            <person name="Oyston P.C.F."/>
            <person name="Quail M.A."/>
            <person name="Rutherford K.M."/>
            <person name="Simmonds M."/>
            <person name="Skelton J."/>
            <person name="Stevens K."/>
            <person name="Whitehead S."/>
            <person name="Barrell B.G."/>
        </authorList>
    </citation>
    <scope>NUCLEOTIDE SEQUENCE [LARGE SCALE GENOMIC DNA]</scope>
    <source>
        <strain>CO-92 / Biovar Orientalis</strain>
    </source>
</reference>
<reference key="2">
    <citation type="journal article" date="2002" name="J. Bacteriol.">
        <title>Genome sequence of Yersinia pestis KIM.</title>
        <authorList>
            <person name="Deng W."/>
            <person name="Burland V."/>
            <person name="Plunkett G. III"/>
            <person name="Boutin A."/>
            <person name="Mayhew G.F."/>
            <person name="Liss P."/>
            <person name="Perna N.T."/>
            <person name="Rose D.J."/>
            <person name="Mau B."/>
            <person name="Zhou S."/>
            <person name="Schwartz D.C."/>
            <person name="Fetherston J.D."/>
            <person name="Lindler L.E."/>
            <person name="Brubaker R.R."/>
            <person name="Plano G.V."/>
            <person name="Straley S.C."/>
            <person name="McDonough K.A."/>
            <person name="Nilles M.L."/>
            <person name="Matson J.S."/>
            <person name="Blattner F.R."/>
            <person name="Perry R.D."/>
        </authorList>
    </citation>
    <scope>NUCLEOTIDE SEQUENCE [LARGE SCALE GENOMIC DNA]</scope>
    <source>
        <strain>KIM10+ / Biovar Mediaevalis</strain>
    </source>
</reference>
<reference key="3">
    <citation type="journal article" date="2004" name="DNA Res.">
        <title>Complete genome sequence of Yersinia pestis strain 91001, an isolate avirulent to humans.</title>
        <authorList>
            <person name="Song Y."/>
            <person name="Tong Z."/>
            <person name="Wang J."/>
            <person name="Wang L."/>
            <person name="Guo Z."/>
            <person name="Han Y."/>
            <person name="Zhang J."/>
            <person name="Pei D."/>
            <person name="Zhou D."/>
            <person name="Qin H."/>
            <person name="Pang X."/>
            <person name="Han Y."/>
            <person name="Zhai J."/>
            <person name="Li M."/>
            <person name="Cui B."/>
            <person name="Qi Z."/>
            <person name="Jin L."/>
            <person name="Dai R."/>
            <person name="Chen F."/>
            <person name="Li S."/>
            <person name="Ye C."/>
            <person name="Du Z."/>
            <person name="Lin W."/>
            <person name="Wang J."/>
            <person name="Yu J."/>
            <person name="Yang H."/>
            <person name="Wang J."/>
            <person name="Huang P."/>
            <person name="Yang R."/>
        </authorList>
    </citation>
    <scope>NUCLEOTIDE SEQUENCE [LARGE SCALE GENOMIC DNA]</scope>
    <source>
        <strain>91001 / Biovar Mediaevalis</strain>
    </source>
</reference>
<keyword id="KW-0975">Bacterial flagellum</keyword>
<keyword id="KW-0998">Cell outer membrane</keyword>
<keyword id="KW-0449">Lipoprotein</keyword>
<keyword id="KW-0472">Membrane</keyword>
<keyword id="KW-0564">Palmitate</keyword>
<keyword id="KW-1185">Reference proteome</keyword>
<keyword id="KW-0732">Signal</keyword>
<proteinExistence type="inferred from homology"/>
<sequence length="229" mass="24444">MYLRKISAPLMTMLLLNGCAYIPHKPLVDGTTSAQPAPASAPLPNGSIFQTVQPMNYGYQPLFEDRRPRNIGDTLTITLQENVSASKSSSANASRNGTSSFGVTTAPRYLDGLLGNGRADMEITGDNTFGGKGGANANNTFSGTITVTVDQVLANGNLHVVGEKQIAINQGTEFIRFSGVVNPRTISGSNSVTSTQVADARIEYVGNGYINEAQTMGWLQRFFLNVSPY</sequence>
<dbReference type="EMBL" id="AL590842">
    <property type="protein sequence ID" value="CAL20445.1"/>
    <property type="molecule type" value="Genomic_DNA"/>
</dbReference>
<dbReference type="EMBL" id="AE009952">
    <property type="protein sequence ID" value="AAM86061.1"/>
    <property type="status" value="ALT_INIT"/>
    <property type="molecule type" value="Genomic_DNA"/>
</dbReference>
<dbReference type="EMBL" id="AE017042">
    <property type="protein sequence ID" value="AAS61822.1"/>
    <property type="status" value="ALT_INIT"/>
    <property type="molecule type" value="Genomic_DNA"/>
</dbReference>
<dbReference type="PIR" id="AB0220">
    <property type="entry name" value="AB0220"/>
</dbReference>
<dbReference type="RefSeq" id="YP_002346800.1">
    <property type="nucleotide sequence ID" value="NC_003143.1"/>
</dbReference>
<dbReference type="SMR" id="Q8ZFB2"/>
<dbReference type="IntAct" id="Q8ZFB2">
    <property type="interactions" value="6"/>
</dbReference>
<dbReference type="STRING" id="214092.YPO1805"/>
<dbReference type="PaxDb" id="214092-YPO1805"/>
<dbReference type="DNASU" id="1147451"/>
<dbReference type="EnsemblBacteria" id="AAS61822">
    <property type="protein sequence ID" value="AAS61822"/>
    <property type="gene ID" value="YP_1588"/>
</dbReference>
<dbReference type="KEGG" id="ype:YPO1805"/>
<dbReference type="KEGG" id="ypk:y2504"/>
<dbReference type="KEGG" id="ypm:YP_1588"/>
<dbReference type="PATRIC" id="fig|1028802.3.peg.1050"/>
<dbReference type="eggNOG" id="COG2063">
    <property type="taxonomic scope" value="Bacteria"/>
</dbReference>
<dbReference type="HOGENOM" id="CLU_069313_0_0_6"/>
<dbReference type="OMA" id="WFDRFFL"/>
<dbReference type="OrthoDB" id="9789463at2"/>
<dbReference type="Proteomes" id="UP000000815">
    <property type="component" value="Chromosome"/>
</dbReference>
<dbReference type="Proteomes" id="UP000001019">
    <property type="component" value="Chromosome"/>
</dbReference>
<dbReference type="Proteomes" id="UP000002490">
    <property type="component" value="Chromosome"/>
</dbReference>
<dbReference type="GO" id="GO:0009427">
    <property type="term" value="C:bacterial-type flagellum basal body, distal rod, L ring"/>
    <property type="evidence" value="ECO:0007669"/>
    <property type="project" value="InterPro"/>
</dbReference>
<dbReference type="GO" id="GO:0009279">
    <property type="term" value="C:cell outer membrane"/>
    <property type="evidence" value="ECO:0007669"/>
    <property type="project" value="UniProtKB-SubCell"/>
</dbReference>
<dbReference type="GO" id="GO:0003774">
    <property type="term" value="F:cytoskeletal motor activity"/>
    <property type="evidence" value="ECO:0007669"/>
    <property type="project" value="InterPro"/>
</dbReference>
<dbReference type="GO" id="GO:0071973">
    <property type="term" value="P:bacterial-type flagellum-dependent cell motility"/>
    <property type="evidence" value="ECO:0007669"/>
    <property type="project" value="InterPro"/>
</dbReference>
<dbReference type="HAMAP" id="MF_00415">
    <property type="entry name" value="FlgH"/>
    <property type="match status" value="1"/>
</dbReference>
<dbReference type="InterPro" id="IPR000527">
    <property type="entry name" value="Flag_Lring"/>
</dbReference>
<dbReference type="NCBIfam" id="NF001301">
    <property type="entry name" value="PRK00249.1-1"/>
    <property type="match status" value="1"/>
</dbReference>
<dbReference type="PANTHER" id="PTHR34933">
    <property type="entry name" value="FLAGELLAR L-RING PROTEIN"/>
    <property type="match status" value="1"/>
</dbReference>
<dbReference type="PANTHER" id="PTHR34933:SF3">
    <property type="entry name" value="FLAGELLAR L-RING PROTEIN"/>
    <property type="match status" value="1"/>
</dbReference>
<dbReference type="Pfam" id="PF02107">
    <property type="entry name" value="FlgH"/>
    <property type="match status" value="1"/>
</dbReference>
<dbReference type="PRINTS" id="PR01008">
    <property type="entry name" value="FLGLRINGFLGH"/>
</dbReference>
<name>FLGH2_YERPE</name>
<accession>Q8ZFB2</accession>
<accession>Q0WFY8</accession>
<accession>Q74UV7</accession>
<accession>Q8CWH3</accession>
<organism>
    <name type="scientific">Yersinia pestis</name>
    <dbReference type="NCBI Taxonomy" id="632"/>
    <lineage>
        <taxon>Bacteria</taxon>
        <taxon>Pseudomonadati</taxon>
        <taxon>Pseudomonadota</taxon>
        <taxon>Gammaproteobacteria</taxon>
        <taxon>Enterobacterales</taxon>
        <taxon>Yersiniaceae</taxon>
        <taxon>Yersinia</taxon>
    </lineage>
</organism>
<comment type="function">
    <text evidence="1">Assembles around the rod to form the L-ring and probably protects the motor/basal body from shearing forces during rotation.</text>
</comment>
<comment type="subunit">
    <text evidence="1">The basal body constitutes a major portion of the flagellar organelle and consists of four rings (L,P,S, and M) mounted on a central rod.</text>
</comment>
<comment type="subcellular location">
    <subcellularLocation>
        <location evidence="1">Cell outer membrane</location>
        <topology evidence="1">Lipid-anchor</topology>
    </subcellularLocation>
    <subcellularLocation>
        <location evidence="1">Bacterial flagellum basal body</location>
    </subcellularLocation>
</comment>
<comment type="similarity">
    <text evidence="3">Belongs to the FlgH family.</text>
</comment>
<comment type="sequence caution" evidence="3">
    <conflict type="erroneous initiation">
        <sequence resource="EMBL-CDS" id="AAM86061"/>
    </conflict>
</comment>
<comment type="sequence caution" evidence="3">
    <conflict type="erroneous initiation">
        <sequence resource="EMBL-CDS" id="AAS61822"/>
    </conflict>
</comment>